<name>GPR82_MOUSE</name>
<keyword id="KW-1003">Cell membrane</keyword>
<keyword id="KW-0297">G-protein coupled receptor</keyword>
<keyword id="KW-0325">Glycoprotein</keyword>
<keyword id="KW-0472">Membrane</keyword>
<keyword id="KW-0675">Receptor</keyword>
<keyword id="KW-1185">Reference proteome</keyword>
<keyword id="KW-0807">Transducer</keyword>
<keyword id="KW-0812">Transmembrane</keyword>
<keyword id="KW-1133">Transmembrane helix</keyword>
<evidence type="ECO:0000255" key="1"/>
<evidence type="ECO:0000255" key="2">
    <source>
        <dbReference type="PROSITE-ProRule" id="PRU00521"/>
    </source>
</evidence>
<reference key="1">
    <citation type="journal article" date="2005" name="Science">
        <title>The transcriptional landscape of the mammalian genome.</title>
        <authorList>
            <person name="Carninci P."/>
            <person name="Kasukawa T."/>
            <person name="Katayama S."/>
            <person name="Gough J."/>
            <person name="Frith M.C."/>
            <person name="Maeda N."/>
            <person name="Oyama R."/>
            <person name="Ravasi T."/>
            <person name="Lenhard B."/>
            <person name="Wells C."/>
            <person name="Kodzius R."/>
            <person name="Shimokawa K."/>
            <person name="Bajic V.B."/>
            <person name="Brenner S.E."/>
            <person name="Batalov S."/>
            <person name="Forrest A.R."/>
            <person name="Zavolan M."/>
            <person name="Davis M.J."/>
            <person name="Wilming L.G."/>
            <person name="Aidinis V."/>
            <person name="Allen J.E."/>
            <person name="Ambesi-Impiombato A."/>
            <person name="Apweiler R."/>
            <person name="Aturaliya R.N."/>
            <person name="Bailey T.L."/>
            <person name="Bansal M."/>
            <person name="Baxter L."/>
            <person name="Beisel K.W."/>
            <person name="Bersano T."/>
            <person name="Bono H."/>
            <person name="Chalk A.M."/>
            <person name="Chiu K.P."/>
            <person name="Choudhary V."/>
            <person name="Christoffels A."/>
            <person name="Clutterbuck D.R."/>
            <person name="Crowe M.L."/>
            <person name="Dalla E."/>
            <person name="Dalrymple B.P."/>
            <person name="de Bono B."/>
            <person name="Della Gatta G."/>
            <person name="di Bernardo D."/>
            <person name="Down T."/>
            <person name="Engstrom P."/>
            <person name="Fagiolini M."/>
            <person name="Faulkner G."/>
            <person name="Fletcher C.F."/>
            <person name="Fukushima T."/>
            <person name="Furuno M."/>
            <person name="Futaki S."/>
            <person name="Gariboldi M."/>
            <person name="Georgii-Hemming P."/>
            <person name="Gingeras T.R."/>
            <person name="Gojobori T."/>
            <person name="Green R.E."/>
            <person name="Gustincich S."/>
            <person name="Harbers M."/>
            <person name="Hayashi Y."/>
            <person name="Hensch T.K."/>
            <person name="Hirokawa N."/>
            <person name="Hill D."/>
            <person name="Huminiecki L."/>
            <person name="Iacono M."/>
            <person name="Ikeo K."/>
            <person name="Iwama A."/>
            <person name="Ishikawa T."/>
            <person name="Jakt M."/>
            <person name="Kanapin A."/>
            <person name="Katoh M."/>
            <person name="Kawasawa Y."/>
            <person name="Kelso J."/>
            <person name="Kitamura H."/>
            <person name="Kitano H."/>
            <person name="Kollias G."/>
            <person name="Krishnan S.P."/>
            <person name="Kruger A."/>
            <person name="Kummerfeld S.K."/>
            <person name="Kurochkin I.V."/>
            <person name="Lareau L.F."/>
            <person name="Lazarevic D."/>
            <person name="Lipovich L."/>
            <person name="Liu J."/>
            <person name="Liuni S."/>
            <person name="McWilliam S."/>
            <person name="Madan Babu M."/>
            <person name="Madera M."/>
            <person name="Marchionni L."/>
            <person name="Matsuda H."/>
            <person name="Matsuzawa S."/>
            <person name="Miki H."/>
            <person name="Mignone F."/>
            <person name="Miyake S."/>
            <person name="Morris K."/>
            <person name="Mottagui-Tabar S."/>
            <person name="Mulder N."/>
            <person name="Nakano N."/>
            <person name="Nakauchi H."/>
            <person name="Ng P."/>
            <person name="Nilsson R."/>
            <person name="Nishiguchi S."/>
            <person name="Nishikawa S."/>
            <person name="Nori F."/>
            <person name="Ohara O."/>
            <person name="Okazaki Y."/>
            <person name="Orlando V."/>
            <person name="Pang K.C."/>
            <person name="Pavan W.J."/>
            <person name="Pavesi G."/>
            <person name="Pesole G."/>
            <person name="Petrovsky N."/>
            <person name="Piazza S."/>
            <person name="Reed J."/>
            <person name="Reid J.F."/>
            <person name="Ring B.Z."/>
            <person name="Ringwald M."/>
            <person name="Rost B."/>
            <person name="Ruan Y."/>
            <person name="Salzberg S.L."/>
            <person name="Sandelin A."/>
            <person name="Schneider C."/>
            <person name="Schoenbach C."/>
            <person name="Sekiguchi K."/>
            <person name="Semple C.A."/>
            <person name="Seno S."/>
            <person name="Sessa L."/>
            <person name="Sheng Y."/>
            <person name="Shibata Y."/>
            <person name="Shimada H."/>
            <person name="Shimada K."/>
            <person name="Silva D."/>
            <person name="Sinclair B."/>
            <person name="Sperling S."/>
            <person name="Stupka E."/>
            <person name="Sugiura K."/>
            <person name="Sultana R."/>
            <person name="Takenaka Y."/>
            <person name="Taki K."/>
            <person name="Tammoja K."/>
            <person name="Tan S.L."/>
            <person name="Tang S."/>
            <person name="Taylor M.S."/>
            <person name="Tegner J."/>
            <person name="Teichmann S.A."/>
            <person name="Ueda H.R."/>
            <person name="van Nimwegen E."/>
            <person name="Verardo R."/>
            <person name="Wei C.L."/>
            <person name="Yagi K."/>
            <person name="Yamanishi H."/>
            <person name="Zabarovsky E."/>
            <person name="Zhu S."/>
            <person name="Zimmer A."/>
            <person name="Hide W."/>
            <person name="Bult C."/>
            <person name="Grimmond S.M."/>
            <person name="Teasdale R.D."/>
            <person name="Liu E.T."/>
            <person name="Brusic V."/>
            <person name="Quackenbush J."/>
            <person name="Wahlestedt C."/>
            <person name="Mattick J.S."/>
            <person name="Hume D.A."/>
            <person name="Kai C."/>
            <person name="Sasaki D."/>
            <person name="Tomaru Y."/>
            <person name="Fukuda S."/>
            <person name="Kanamori-Katayama M."/>
            <person name="Suzuki M."/>
            <person name="Aoki J."/>
            <person name="Arakawa T."/>
            <person name="Iida J."/>
            <person name="Imamura K."/>
            <person name="Itoh M."/>
            <person name="Kato T."/>
            <person name="Kawaji H."/>
            <person name="Kawagashira N."/>
            <person name="Kawashima T."/>
            <person name="Kojima M."/>
            <person name="Kondo S."/>
            <person name="Konno H."/>
            <person name="Nakano K."/>
            <person name="Ninomiya N."/>
            <person name="Nishio T."/>
            <person name="Okada M."/>
            <person name="Plessy C."/>
            <person name="Shibata K."/>
            <person name="Shiraki T."/>
            <person name="Suzuki S."/>
            <person name="Tagami M."/>
            <person name="Waki K."/>
            <person name="Watahiki A."/>
            <person name="Okamura-Oho Y."/>
            <person name="Suzuki H."/>
            <person name="Kawai J."/>
            <person name="Hayashizaki Y."/>
        </authorList>
    </citation>
    <scope>NUCLEOTIDE SEQUENCE [LARGE SCALE MRNA]</scope>
    <source>
        <strain>C57BL/6J</strain>
        <tissue>Epididymis</tissue>
    </source>
</reference>
<reference key="2">
    <citation type="journal article" date="2009" name="PLoS Biol.">
        <title>Lineage-specific biology revealed by a finished genome assembly of the mouse.</title>
        <authorList>
            <person name="Church D.M."/>
            <person name="Goodstadt L."/>
            <person name="Hillier L.W."/>
            <person name="Zody M.C."/>
            <person name="Goldstein S."/>
            <person name="She X."/>
            <person name="Bult C.J."/>
            <person name="Agarwala R."/>
            <person name="Cherry J.L."/>
            <person name="DiCuccio M."/>
            <person name="Hlavina W."/>
            <person name="Kapustin Y."/>
            <person name="Meric P."/>
            <person name="Maglott D."/>
            <person name="Birtle Z."/>
            <person name="Marques A.C."/>
            <person name="Graves T."/>
            <person name="Zhou S."/>
            <person name="Teague B."/>
            <person name="Potamousis K."/>
            <person name="Churas C."/>
            <person name="Place M."/>
            <person name="Herschleb J."/>
            <person name="Runnheim R."/>
            <person name="Forrest D."/>
            <person name="Amos-Landgraf J."/>
            <person name="Schwartz D.C."/>
            <person name="Cheng Z."/>
            <person name="Lindblad-Toh K."/>
            <person name="Eichler E.E."/>
            <person name="Ponting C.P."/>
        </authorList>
    </citation>
    <scope>NUCLEOTIDE SEQUENCE [LARGE SCALE GENOMIC DNA]</scope>
    <source>
        <strain>C57BL/6J</strain>
    </source>
</reference>
<reference key="3">
    <citation type="journal article" date="2004" name="Genome Res.">
        <title>The status, quality, and expansion of the NIH full-length cDNA project: the Mammalian Gene Collection (MGC).</title>
        <authorList>
            <consortium name="The MGC Project Team"/>
        </authorList>
    </citation>
    <scope>NUCLEOTIDE SEQUENCE [LARGE SCALE MRNA]</scope>
</reference>
<reference key="4">
    <citation type="journal article" date="2003" name="Proc. Natl. Acad. Sci. U.S.A.">
        <title>The G protein-coupled receptor repertoires of human and mouse.</title>
        <authorList>
            <person name="Vassilatis D.K."/>
            <person name="Hohmann J.G."/>
            <person name="Zeng H."/>
            <person name="Li F."/>
            <person name="Ranchalis J.E."/>
            <person name="Mortrud M.T."/>
            <person name="Brown A."/>
            <person name="Rodriguez S.S."/>
            <person name="Weller J.R."/>
            <person name="Wright A.C."/>
            <person name="Bergmann J.E."/>
            <person name="Gaitanaris G.A."/>
        </authorList>
    </citation>
    <scope>NUCLEOTIDE SEQUENCE [LARGE SCALE MRNA] OF 130-233</scope>
</reference>
<sequence length="328" mass="37555">MTNNSTCIQPSVISTTALPVTYIFLFIIGLFGNSLAQWVFLTKIGKKTSTHIYLANLVTANLLVCTAMPFMGIYFLRGFYWKYQSVQCRLVNFLGTLSMHVSMFVSLLILSWIAISRYATLMKKESKQEATSCYERMFYGHVLKRFRQPNFARTMCIYIWGVVLVIIIPVTLYYSVVEATEEGQSQCYNRQMELGARPSQIAGLIGTTFIGFSFLVVVTSYYSLVSHLRRVRTCTSITEKDLTYRSVKRHLLIIQVLLVVCFLPYSIFKPIFYVLHQREGDCQQLNYLIEAKNILTCLASARSSTDPIIFLLLDKTFKKTLYGLLTKS</sequence>
<accession>Q8BZR0</accession>
<accession>Q80UB1</accession>
<gene>
    <name type="primary">Gpr82</name>
</gene>
<proteinExistence type="evidence at transcript level"/>
<organism>
    <name type="scientific">Mus musculus</name>
    <name type="common">Mouse</name>
    <dbReference type="NCBI Taxonomy" id="10090"/>
    <lineage>
        <taxon>Eukaryota</taxon>
        <taxon>Metazoa</taxon>
        <taxon>Chordata</taxon>
        <taxon>Craniata</taxon>
        <taxon>Vertebrata</taxon>
        <taxon>Euteleostomi</taxon>
        <taxon>Mammalia</taxon>
        <taxon>Eutheria</taxon>
        <taxon>Euarchontoglires</taxon>
        <taxon>Glires</taxon>
        <taxon>Rodentia</taxon>
        <taxon>Myomorpha</taxon>
        <taxon>Muroidea</taxon>
        <taxon>Muridae</taxon>
        <taxon>Murinae</taxon>
        <taxon>Mus</taxon>
        <taxon>Mus</taxon>
    </lineage>
</organism>
<dbReference type="EMBL" id="AK033761">
    <property type="protein sequence ID" value="BAC28466.1"/>
    <property type="molecule type" value="mRNA"/>
</dbReference>
<dbReference type="EMBL" id="AL671117">
    <property type="status" value="NOT_ANNOTATED_CDS"/>
    <property type="molecule type" value="Genomic_DNA"/>
</dbReference>
<dbReference type="EMBL" id="BC116704">
    <property type="protein sequence ID" value="AAI16705.1"/>
    <property type="molecule type" value="mRNA"/>
</dbReference>
<dbReference type="EMBL" id="AY255571">
    <property type="protein sequence ID" value="AAO85083.1"/>
    <property type="molecule type" value="mRNA"/>
</dbReference>
<dbReference type="CCDS" id="CCDS30029.1"/>
<dbReference type="RefSeq" id="NP_783600.1">
    <property type="nucleotide sequence ID" value="NM_175669.4"/>
</dbReference>
<dbReference type="RefSeq" id="XP_011245777.1">
    <property type="nucleotide sequence ID" value="XM_011247475.1"/>
</dbReference>
<dbReference type="RefSeq" id="XP_017174011.1">
    <property type="nucleotide sequence ID" value="XM_017318522.2"/>
</dbReference>
<dbReference type="RefSeq" id="XP_030107224.1">
    <property type="nucleotide sequence ID" value="XM_030251364.1"/>
</dbReference>
<dbReference type="SMR" id="Q8BZR0"/>
<dbReference type="FunCoup" id="Q8BZR0">
    <property type="interactions" value="62"/>
</dbReference>
<dbReference type="STRING" id="10090.ENSMUSP00000062535"/>
<dbReference type="GlyCosmos" id="Q8BZR0">
    <property type="glycosylation" value="2 sites, No reported glycans"/>
</dbReference>
<dbReference type="GlyGen" id="Q8BZR0">
    <property type="glycosylation" value="2 sites"/>
</dbReference>
<dbReference type="iPTMnet" id="Q8BZR0"/>
<dbReference type="PhosphoSitePlus" id="Q8BZR0"/>
<dbReference type="PaxDb" id="10090-ENSMUSP00000062535"/>
<dbReference type="ProteomicsDB" id="271457"/>
<dbReference type="Antibodypedia" id="10923">
    <property type="antibodies" value="141 antibodies from 25 providers"/>
</dbReference>
<dbReference type="DNASU" id="319200"/>
<dbReference type="Ensembl" id="ENSMUST00000053659.2">
    <property type="protein sequence ID" value="ENSMUSP00000062535.2"/>
    <property type="gene ID" value="ENSMUSG00000047678.2"/>
</dbReference>
<dbReference type="GeneID" id="319200"/>
<dbReference type="KEGG" id="mmu:319200"/>
<dbReference type="UCSC" id="uc009srv.1">
    <property type="organism name" value="mouse"/>
</dbReference>
<dbReference type="AGR" id="MGI:2441734"/>
<dbReference type="CTD" id="27197"/>
<dbReference type="MGI" id="MGI:2441734">
    <property type="gene designation" value="Gpr82"/>
</dbReference>
<dbReference type="VEuPathDB" id="HostDB:ENSMUSG00000047678"/>
<dbReference type="eggNOG" id="ENOG502R3JZ">
    <property type="taxonomic scope" value="Eukaryota"/>
</dbReference>
<dbReference type="GeneTree" id="ENSGT00990000203527"/>
<dbReference type="HOGENOM" id="CLU_060761_0_0_1"/>
<dbReference type="InParanoid" id="Q8BZR0"/>
<dbReference type="OMA" id="QKNTCIG"/>
<dbReference type="OrthoDB" id="9946711at2759"/>
<dbReference type="PhylomeDB" id="Q8BZR0"/>
<dbReference type="TreeFam" id="TF337127"/>
<dbReference type="BioGRID-ORCS" id="319200">
    <property type="hits" value="2 hits in 77 CRISPR screens"/>
</dbReference>
<dbReference type="PRO" id="PR:Q8BZR0"/>
<dbReference type="Proteomes" id="UP000000589">
    <property type="component" value="Chromosome X"/>
</dbReference>
<dbReference type="RNAct" id="Q8BZR0">
    <property type="molecule type" value="protein"/>
</dbReference>
<dbReference type="Bgee" id="ENSMUSG00000047678">
    <property type="expression patterns" value="Expressed in mesodermal cell in embryo and 18 other cell types or tissues"/>
</dbReference>
<dbReference type="GO" id="GO:0005886">
    <property type="term" value="C:plasma membrane"/>
    <property type="evidence" value="ECO:0007669"/>
    <property type="project" value="UniProtKB-SubCell"/>
</dbReference>
<dbReference type="GO" id="GO:0004930">
    <property type="term" value="F:G protein-coupled receptor activity"/>
    <property type="evidence" value="ECO:0007669"/>
    <property type="project" value="UniProtKB-KW"/>
</dbReference>
<dbReference type="GO" id="GO:0060612">
    <property type="term" value="P:adipose tissue development"/>
    <property type="evidence" value="ECO:0000315"/>
    <property type="project" value="MGI"/>
</dbReference>
<dbReference type="GO" id="GO:0097009">
    <property type="term" value="P:energy homeostasis"/>
    <property type="evidence" value="ECO:0000315"/>
    <property type="project" value="MGI"/>
</dbReference>
<dbReference type="GO" id="GO:0032094">
    <property type="term" value="P:response to food"/>
    <property type="evidence" value="ECO:0000315"/>
    <property type="project" value="MGI"/>
</dbReference>
<dbReference type="GO" id="GO:0009749">
    <property type="term" value="P:response to glucose"/>
    <property type="evidence" value="ECO:0000315"/>
    <property type="project" value="MGI"/>
</dbReference>
<dbReference type="GO" id="GO:0032868">
    <property type="term" value="P:response to insulin"/>
    <property type="evidence" value="ECO:0000315"/>
    <property type="project" value="MGI"/>
</dbReference>
<dbReference type="GO" id="GO:0006641">
    <property type="term" value="P:triglyceride metabolic process"/>
    <property type="evidence" value="ECO:0000315"/>
    <property type="project" value="MGI"/>
</dbReference>
<dbReference type="CDD" id="cd14996">
    <property type="entry name" value="7tmA_GPR82"/>
    <property type="match status" value="1"/>
</dbReference>
<dbReference type="Gene3D" id="1.20.1070.10">
    <property type="entry name" value="Rhodopsin 7-helix transmembrane proteins"/>
    <property type="match status" value="1"/>
</dbReference>
<dbReference type="InterPro" id="IPR000276">
    <property type="entry name" value="GPCR_Rhodpsn"/>
</dbReference>
<dbReference type="InterPro" id="IPR017452">
    <property type="entry name" value="GPCR_Rhodpsn_7TM"/>
</dbReference>
<dbReference type="InterPro" id="IPR042804">
    <property type="entry name" value="GPR82"/>
</dbReference>
<dbReference type="PANTHER" id="PTHR47392">
    <property type="entry name" value="G-PROTEIN COUPLED RECEPTOR 82-RELATED"/>
    <property type="match status" value="1"/>
</dbReference>
<dbReference type="PANTHER" id="PTHR47392:SF1">
    <property type="entry name" value="G-PROTEIN COUPLED RECEPTOR 82-RELATED"/>
    <property type="match status" value="1"/>
</dbReference>
<dbReference type="Pfam" id="PF00001">
    <property type="entry name" value="7tm_1"/>
    <property type="match status" value="1"/>
</dbReference>
<dbReference type="PRINTS" id="PR00237">
    <property type="entry name" value="GPCRRHODOPSN"/>
</dbReference>
<dbReference type="SUPFAM" id="SSF81321">
    <property type="entry name" value="Family A G protein-coupled receptor-like"/>
    <property type="match status" value="1"/>
</dbReference>
<dbReference type="PROSITE" id="PS50262">
    <property type="entry name" value="G_PROTEIN_RECEP_F1_2"/>
    <property type="match status" value="1"/>
</dbReference>
<feature type="chain" id="PRO_0000303082" description="Probable G-protein coupled receptor 82">
    <location>
        <begin position="1"/>
        <end position="328"/>
    </location>
</feature>
<feature type="topological domain" description="Extracellular" evidence="1">
    <location>
        <begin position="1"/>
        <end position="11"/>
    </location>
</feature>
<feature type="transmembrane region" description="Helical; Name=1" evidence="1">
    <location>
        <begin position="12"/>
        <end position="32"/>
    </location>
</feature>
<feature type="topological domain" description="Cytoplasmic" evidence="1">
    <location>
        <begin position="33"/>
        <end position="55"/>
    </location>
</feature>
<feature type="transmembrane region" description="Helical; Name=2" evidence="1">
    <location>
        <begin position="56"/>
        <end position="76"/>
    </location>
</feature>
<feature type="topological domain" description="Extracellular" evidence="1">
    <location>
        <begin position="77"/>
        <end position="92"/>
    </location>
</feature>
<feature type="transmembrane region" description="Helical; Name=3" evidence="1">
    <location>
        <begin position="93"/>
        <end position="115"/>
    </location>
</feature>
<feature type="topological domain" description="Cytoplasmic" evidence="1">
    <location>
        <begin position="116"/>
        <end position="156"/>
    </location>
</feature>
<feature type="transmembrane region" description="Helical; Name=4" evidence="1">
    <location>
        <begin position="157"/>
        <end position="177"/>
    </location>
</feature>
<feature type="topological domain" description="Extracellular" evidence="1">
    <location>
        <begin position="178"/>
        <end position="197"/>
    </location>
</feature>
<feature type="transmembrane region" description="Helical; Name=5" evidence="1">
    <location>
        <begin position="198"/>
        <end position="218"/>
    </location>
</feature>
<feature type="topological domain" description="Cytoplasmic" evidence="1">
    <location>
        <begin position="219"/>
        <end position="251"/>
    </location>
</feature>
<feature type="transmembrane region" description="Helical; Name=6" evidence="1">
    <location>
        <begin position="252"/>
        <end position="272"/>
    </location>
</feature>
<feature type="topological domain" description="Extracellular" evidence="1">
    <location>
        <begin position="273"/>
        <end position="328"/>
    </location>
</feature>
<feature type="glycosylation site" description="N-linked (GlcNAc...) asparagine" evidence="1">
    <location>
        <position position="3"/>
    </location>
</feature>
<feature type="glycosylation site" description="N-linked (GlcNAc...) asparagine" evidence="1">
    <location>
        <position position="4"/>
    </location>
</feature>
<protein>
    <recommendedName>
        <fullName>Probable G-protein coupled receptor 82</fullName>
    </recommendedName>
</protein>
<comment type="function">
    <text>Orphan receptor.</text>
</comment>
<comment type="subcellular location">
    <subcellularLocation>
        <location>Cell membrane</location>
        <topology>Multi-pass membrane protein</topology>
    </subcellularLocation>
</comment>
<comment type="similarity">
    <text evidence="2">Belongs to the G-protein coupled receptor 1 family.</text>
</comment>